<proteinExistence type="evidence at protein level"/>
<organism>
    <name type="scientific">Bothrops mattogrossensis</name>
    <name type="common">Pitviper</name>
    <name type="synonym">Bothrops neuwiedi mattogrossensis</name>
    <dbReference type="NCBI Taxonomy" id="1171125"/>
    <lineage>
        <taxon>Eukaryota</taxon>
        <taxon>Metazoa</taxon>
        <taxon>Chordata</taxon>
        <taxon>Craniata</taxon>
        <taxon>Vertebrata</taxon>
        <taxon>Euteleostomi</taxon>
        <taxon>Lepidosauria</taxon>
        <taxon>Squamata</taxon>
        <taxon>Bifurcata</taxon>
        <taxon>Unidentata</taxon>
        <taxon>Episquamata</taxon>
        <taxon>Toxicofera</taxon>
        <taxon>Serpentes</taxon>
        <taxon>Colubroidea</taxon>
        <taxon>Viperidae</taxon>
        <taxon>Crotalinae</taxon>
        <taxon>Bothrops</taxon>
    </lineage>
</organism>
<comment type="function">
    <text evidence="1 3">Snake venom phospholipase A2 homolog that lacks enzymatic activity (PubMed:24724078). Shows high myotoxic activity, neutrophil activation (demonstrated by activation induction of IL-1beta production), and slight cytotoxicity against Jurkat (leukemia T) and SK-BR-3 (breast adenocarcinoma) tumor cell lines (PubMed:24724078). A model of myotoxic mechanism has been proposed: an apo Lys49-PLA2 is activated by the entrance of a hydrophobic molecule (e.g. fatty acid) at the hydrophobic channel of the protein leading to a reorientation of a monomer (By similarity). This reorientation causes a transition between 'inactive' to 'active' states, causing alignment of C-terminal and membrane-docking sites (MDoS) side-by-side and putting the membrane-disruption sites (MDiS) in the same plane, exposed to solvent and in a symmetric position for both monomers (By similarity). The MDoS region stabilizes the toxin on membrane by the interaction of charged residues with phospholipid head groups (By similarity). Subsequently, the MDiS region destabilizes the membrane with penetration of hydrophobic residues (By similarity). This insertion causes a disorganization of the membrane, allowing an uncontrolled influx of ions (i.e. calcium and sodium), and eventually triggering irreversible intracellular alterations and cell death (By similarity).</text>
</comment>
<comment type="subunit">
    <text evidence="3">Monomer.</text>
</comment>
<comment type="subcellular location">
    <subcellularLocation>
        <location evidence="3">Secreted</location>
    </subcellularLocation>
</comment>
<comment type="tissue specificity">
    <text evidence="6">Expressed by the venom gland.</text>
</comment>
<comment type="mass spectrometry"/>
<comment type="similarity">
    <text evidence="5">Belongs to the phospholipase A2 family. Group II subfamily. K49 sub-subfamily.</text>
</comment>
<dbReference type="SMR" id="P0DMK0"/>
<dbReference type="GO" id="GO:0005576">
    <property type="term" value="C:extracellular region"/>
    <property type="evidence" value="ECO:0007669"/>
    <property type="project" value="UniProtKB-SubCell"/>
</dbReference>
<dbReference type="GO" id="GO:0004623">
    <property type="term" value="F:phospholipase A2 activity"/>
    <property type="evidence" value="ECO:0007669"/>
    <property type="project" value="InterPro"/>
</dbReference>
<dbReference type="GO" id="GO:0090729">
    <property type="term" value="F:toxin activity"/>
    <property type="evidence" value="ECO:0007669"/>
    <property type="project" value="UniProtKB-KW"/>
</dbReference>
<dbReference type="GO" id="GO:0050482">
    <property type="term" value="P:arachidonate secretion"/>
    <property type="evidence" value="ECO:0007669"/>
    <property type="project" value="InterPro"/>
</dbReference>
<dbReference type="GO" id="GO:0006644">
    <property type="term" value="P:phospholipid metabolic process"/>
    <property type="evidence" value="ECO:0007669"/>
    <property type="project" value="InterPro"/>
</dbReference>
<dbReference type="Gene3D" id="1.20.90.10">
    <property type="entry name" value="Phospholipase A2 domain"/>
    <property type="match status" value="1"/>
</dbReference>
<dbReference type="InterPro" id="IPR036444">
    <property type="entry name" value="PLipase_A2_dom_sf"/>
</dbReference>
<dbReference type="SUPFAM" id="SSF48619">
    <property type="entry name" value="Phospholipase A2, PLA2"/>
    <property type="match status" value="1"/>
</dbReference>
<protein>
    <recommendedName>
        <fullName evidence="4">Basic phospholipase A2 homolog BmatTX-II</fullName>
        <shortName>svPLA2 homolog</shortName>
    </recommendedName>
    <alternativeName>
        <fullName>Lys49 PLA2-like</fullName>
    </alternativeName>
</protein>
<accession>P0DMK0</accession>
<feature type="chain" id="PRO_0000429741" description="Basic phospholipase A2 homolog BmatTX-II">
    <location>
        <begin position="1"/>
        <end position="28" status="greater than"/>
    </location>
</feature>
<feature type="disulfide bond" evidence="2">
    <location>
        <begin position="26"/>
        <end status="unknown"/>
    </location>
</feature>
<feature type="disulfide bond" evidence="2">
    <location>
        <begin position="28"/>
        <end status="unknown"/>
    </location>
</feature>
<feature type="non-terminal residue">
    <location>
        <position position="28"/>
    </location>
</feature>
<evidence type="ECO:0000250" key="1">
    <source>
        <dbReference type="UniProtKB" id="I6L8L6"/>
    </source>
</evidence>
<evidence type="ECO:0000250" key="2">
    <source>
        <dbReference type="UniProtKB" id="Q90249"/>
    </source>
</evidence>
<evidence type="ECO:0000269" key="3">
    <source>
    </source>
</evidence>
<evidence type="ECO:0000303" key="4">
    <source>
    </source>
</evidence>
<evidence type="ECO:0000305" key="5"/>
<evidence type="ECO:0000305" key="6">
    <source>
    </source>
</evidence>
<sequence>SLFELGKMILQETGKNPAQSYGAYGCNC</sequence>
<reference key="1">
    <citation type="journal article" date="2014" name="Biomed. Res. Int.">
        <title>Purification and biochemical characterization of three myotoxins from Bothrops mattogrossensis snake venom with toxicity against Leishmania and tumor cells.</title>
        <authorList>
            <person name="de Moura A.A."/>
            <person name="Kayano A.M."/>
            <person name="Oliveira G.A."/>
            <person name="Setubal S.S."/>
            <person name="Ribeiro J.G."/>
            <person name="Barros N.B."/>
            <person name="Nicolete R."/>
            <person name="Moura L.A."/>
            <person name="Fuly A.L."/>
            <person name="Nomizo A."/>
            <person name="da Silva S.L."/>
            <person name="Fernandes C.F."/>
            <person name="Zuliani J.P."/>
            <person name="Stabeli R.G."/>
            <person name="Soares A.M."/>
            <person name="Calderon L.A."/>
        </authorList>
    </citation>
    <scope>PROTEIN SEQUENCE</scope>
    <scope>FUNCTION</scope>
    <scope>SUBUNIT</scope>
    <scope>MASS SPECTROMETRY</scope>
    <scope>SUBCELLULAR LOCATION</scope>
</reference>
<keyword id="KW-0903">Direct protein sequencing</keyword>
<keyword id="KW-1015">Disulfide bond</keyword>
<keyword id="KW-0959">Myotoxin</keyword>
<keyword id="KW-0964">Secreted</keyword>
<keyword id="KW-0800">Toxin</keyword>
<name>PA2H2_BOTMT</name>